<proteinExistence type="evidence at protein level"/>
<dbReference type="EMBL" id="AJ278191">
    <property type="protein sequence ID" value="CAB95697.1"/>
    <property type="molecule type" value="mRNA"/>
</dbReference>
<dbReference type="EMBL" id="AJ249129">
    <property type="protein sequence ID" value="CAB65270.1"/>
    <property type="molecule type" value="mRNA"/>
</dbReference>
<dbReference type="EMBL" id="BC039979">
    <property type="protein sequence ID" value="AAH39979.1"/>
    <property type="status" value="ALT_INIT"/>
    <property type="molecule type" value="mRNA"/>
</dbReference>
<dbReference type="EMBL" id="BC045602">
    <property type="protein sequence ID" value="AAH45602.1"/>
    <property type="status" value="ALT_INIT"/>
    <property type="molecule type" value="mRNA"/>
</dbReference>
<dbReference type="RefSeq" id="NP_064663.2">
    <property type="nucleotide sequence ID" value="NM_020267.2"/>
</dbReference>
<dbReference type="SMR" id="Q9QXA7"/>
<dbReference type="FunCoup" id="Q9QXA7">
    <property type="interactions" value="1279"/>
</dbReference>
<dbReference type="IntAct" id="Q9QXA7">
    <property type="interactions" value="1"/>
</dbReference>
<dbReference type="STRING" id="10090.ENSMUSP00000099633"/>
<dbReference type="iPTMnet" id="Q9QXA7"/>
<dbReference type="PhosphoSitePlus" id="Q9QXA7"/>
<dbReference type="PaxDb" id="10090-ENSMUSP00000099633"/>
<dbReference type="ProteomicsDB" id="259322"/>
<dbReference type="Pumba" id="Q9QXA7"/>
<dbReference type="DNASU" id="80985"/>
<dbReference type="GeneID" id="80985"/>
<dbReference type="KEGG" id="mmu:80985"/>
<dbReference type="AGR" id="MGI:1931835"/>
<dbReference type="CTD" id="54765"/>
<dbReference type="MGI" id="MGI:1931835">
    <property type="gene designation" value="Trim44"/>
</dbReference>
<dbReference type="eggNOG" id="ENOG502RHR7">
    <property type="taxonomic scope" value="Eukaryota"/>
</dbReference>
<dbReference type="InParanoid" id="Q9QXA7"/>
<dbReference type="OrthoDB" id="9049620at2759"/>
<dbReference type="PhylomeDB" id="Q9QXA7"/>
<dbReference type="BioGRID-ORCS" id="80985">
    <property type="hits" value="6 hits in 76 CRISPR screens"/>
</dbReference>
<dbReference type="ChiTaRS" id="Trim44">
    <property type="organism name" value="mouse"/>
</dbReference>
<dbReference type="PRO" id="PR:Q9QXA7"/>
<dbReference type="Proteomes" id="UP000000589">
    <property type="component" value="Unplaced"/>
</dbReference>
<dbReference type="RNAct" id="Q9QXA7">
    <property type="molecule type" value="protein"/>
</dbReference>
<dbReference type="GO" id="GO:0008270">
    <property type="term" value="F:zinc ion binding"/>
    <property type="evidence" value="ECO:0007669"/>
    <property type="project" value="UniProtKB-KW"/>
</dbReference>
<dbReference type="CDD" id="cd19841">
    <property type="entry name" value="Bbox1_TRIM44"/>
    <property type="match status" value="1"/>
</dbReference>
<dbReference type="CDD" id="cd19784">
    <property type="entry name" value="Bbox2_TRIM44"/>
    <property type="match status" value="1"/>
</dbReference>
<dbReference type="Gene3D" id="4.10.830.40">
    <property type="match status" value="1"/>
</dbReference>
<dbReference type="Gene3D" id="3.30.160.60">
    <property type="entry name" value="Classic Zinc Finger"/>
    <property type="match status" value="1"/>
</dbReference>
<dbReference type="InterPro" id="IPR050143">
    <property type="entry name" value="TRIM/RBCC"/>
</dbReference>
<dbReference type="InterPro" id="IPR000315">
    <property type="entry name" value="Znf_B-box"/>
</dbReference>
<dbReference type="PANTHER" id="PTHR24103">
    <property type="entry name" value="E3 UBIQUITIN-PROTEIN LIGASE TRIM"/>
    <property type="match status" value="1"/>
</dbReference>
<dbReference type="Pfam" id="PF00643">
    <property type="entry name" value="zf-B_box"/>
    <property type="match status" value="1"/>
</dbReference>
<dbReference type="SMART" id="SM00336">
    <property type="entry name" value="BBOX"/>
    <property type="match status" value="1"/>
</dbReference>
<dbReference type="SUPFAM" id="SSF57845">
    <property type="entry name" value="B-box zinc-binding domain"/>
    <property type="match status" value="1"/>
</dbReference>
<dbReference type="PROSITE" id="PS50119">
    <property type="entry name" value="ZF_BBOX"/>
    <property type="match status" value="1"/>
</dbReference>
<gene>
    <name type="primary">Trim44</name>
    <name type="synonym">Dipb</name>
</gene>
<feature type="chain" id="PRO_0000220373" description="Tripartite motif-containing protein 44">
    <location>
        <begin position="1"/>
        <end position="346"/>
    </location>
</feature>
<feature type="zinc finger region" description="B box-type" evidence="3">
    <location>
        <begin position="176"/>
        <end position="217"/>
    </location>
</feature>
<feature type="region of interest" description="Disordered" evidence="4">
    <location>
        <begin position="68"/>
        <end position="167"/>
    </location>
</feature>
<feature type="region of interest" description="Disordered" evidence="4">
    <location>
        <begin position="313"/>
        <end position="346"/>
    </location>
</feature>
<feature type="coiled-coil region" evidence="2">
    <location>
        <begin position="292"/>
        <end position="327"/>
    </location>
</feature>
<feature type="compositionally biased region" description="Acidic residues" evidence="4">
    <location>
        <begin position="89"/>
        <end position="167"/>
    </location>
</feature>
<feature type="compositionally biased region" description="Acidic residues" evidence="4">
    <location>
        <begin position="332"/>
        <end position="346"/>
    </location>
</feature>
<feature type="binding site" evidence="3">
    <location>
        <position position="181"/>
    </location>
    <ligand>
        <name>Zn(2+)</name>
        <dbReference type="ChEBI" id="CHEBI:29105"/>
    </ligand>
</feature>
<feature type="binding site" evidence="3">
    <location>
        <position position="184"/>
    </location>
    <ligand>
        <name>Zn(2+)</name>
        <dbReference type="ChEBI" id="CHEBI:29105"/>
    </ligand>
</feature>
<feature type="binding site" evidence="3">
    <location>
        <position position="203"/>
    </location>
    <ligand>
        <name>Zn(2+)</name>
        <dbReference type="ChEBI" id="CHEBI:29105"/>
    </ligand>
</feature>
<feature type="binding site" evidence="3">
    <location>
        <position position="209"/>
    </location>
    <ligand>
        <name>Zn(2+)</name>
        <dbReference type="ChEBI" id="CHEBI:29105"/>
    </ligand>
</feature>
<feature type="modified residue" description="Phosphoserine" evidence="7">
    <location>
        <position position="338"/>
    </location>
</feature>
<feature type="modified residue" description="Phosphoserine" evidence="7">
    <location>
        <position position="341"/>
    </location>
</feature>
<feature type="sequence conflict" description="In Ref. 1; CAB95697." evidence="6" ref="1">
    <original>A</original>
    <variation>G</variation>
    <location>
        <position position="82"/>
    </location>
</feature>
<feature type="sequence conflict" description="In Ref. 2; CAB65270." evidence="6" ref="2">
    <original>Q</original>
    <variation>R</variation>
    <location>
        <position position="139"/>
    </location>
</feature>
<feature type="sequence conflict" description="In Ref. 1; CAB95697 and 3; AAH39979/AAH45602." evidence="6" ref="1 3">
    <location>
        <position position="150"/>
    </location>
</feature>
<feature type="sequence conflict" description="In Ref. 2; CAB65270." evidence="6" ref="2">
    <original>D</original>
    <variation>H</variation>
    <location>
        <position position="228"/>
    </location>
</feature>
<feature type="sequence conflict" description="In Ref. 2; CAB65270." evidence="6" ref="2">
    <original>K</original>
    <variation>T</variation>
    <location>
        <position position="246"/>
    </location>
</feature>
<sequence>MASGVGAACEELPPDGTCDECEPDEAPGAEEVCRDCGFCYCRRHADAHRQKFLSHRLAAYVHGAQAWTPPASGGDDALPEDAEAKGEAEGEVESEVGEEESETEVDSESEEESETEEDSEDESDEESEEDSEEEMEDEQESEAEEDNQEEGESEAEGETEAESEFDPEIEMEAERVAKRKCPDHGLDLSTYCQEDRQLICVLCPVIGAHRGHQLSTLDEAFEELRSKDSGGLKAAMIELVERLKFKSSDPKVTRDQMKIFIQQEFKKVQKVIADEEQKALHLVDIQEAMATAHVTEILADIQSHMDRLMTQMAQAKEQLDTSNESAEPKAEGDEEGPSGASEEEDT</sequence>
<evidence type="ECO:0000250" key="1">
    <source>
        <dbReference type="UniProtKB" id="Q96DX7"/>
    </source>
</evidence>
<evidence type="ECO:0000255" key="2"/>
<evidence type="ECO:0000255" key="3">
    <source>
        <dbReference type="PROSITE-ProRule" id="PRU00024"/>
    </source>
</evidence>
<evidence type="ECO:0000256" key="4">
    <source>
        <dbReference type="SAM" id="MobiDB-lite"/>
    </source>
</evidence>
<evidence type="ECO:0000269" key="5">
    <source>
    </source>
</evidence>
<evidence type="ECO:0000305" key="6"/>
<evidence type="ECO:0007744" key="7">
    <source>
    </source>
</evidence>
<reference key="1">
    <citation type="journal article" date="2001" name="Brain Res. Mol. Brain Res.">
        <title>Isolation of a mouse brain cDNA expressed in developing neuroblasts and mature neurons.</title>
        <authorList>
            <person name="Boutou E."/>
            <person name="Matsas R."/>
            <person name="Mamalaki A."/>
        </authorList>
    </citation>
    <scope>NUCLEOTIDE SEQUENCE [MRNA]</scope>
    <source>
        <tissue>Brain</tissue>
    </source>
</reference>
<reference key="2">
    <citation type="submission" date="2000-01" db="EMBL/GenBank/DDBJ databases">
        <title>Identification of a novel brain potential partner of dystrophin and utrophin C-terminal end.</title>
        <authorList>
            <person name="Castello A."/>
            <person name="Chafey P."/>
            <person name="Lambert M."/>
            <person name="Collod-Beroud G."/>
        </authorList>
    </citation>
    <scope>NUCLEOTIDE SEQUENCE [MRNA]</scope>
    <source>
        <tissue>Brain</tissue>
    </source>
</reference>
<reference key="3">
    <citation type="journal article" date="2004" name="Genome Res.">
        <title>The status, quality, and expansion of the NIH full-length cDNA project: the Mammalian Gene Collection (MGC).</title>
        <authorList>
            <consortium name="The MGC Project Team"/>
        </authorList>
    </citation>
    <scope>NUCLEOTIDE SEQUENCE [LARGE SCALE MRNA] OF 124-346</scope>
    <source>
        <strain>FVB/N</strain>
        <tissue>Salivary gland</tissue>
    </source>
</reference>
<reference key="4">
    <citation type="journal article" date="2009" name="Biochem. Biophys. Res. Commun.">
        <title>TRIM44 interacts with and stabilizes terf, a TRIM ubiquitin E3 ligase.</title>
        <authorList>
            <person name="Urano T."/>
            <person name="Usui T."/>
            <person name="Takeda S."/>
            <person name="Ikeda K."/>
            <person name="Okada A."/>
            <person name="Ishida Y."/>
            <person name="Iwayanagi T."/>
            <person name="Otomo J."/>
            <person name="Ouchi Y."/>
            <person name="Inoue S."/>
        </authorList>
    </citation>
    <scope>TISSUE SPECIFICITY</scope>
</reference>
<reference key="5">
    <citation type="journal article" date="2010" name="Cell">
        <title>A tissue-specific atlas of mouse protein phosphorylation and expression.</title>
        <authorList>
            <person name="Huttlin E.L."/>
            <person name="Jedrychowski M.P."/>
            <person name="Elias J.E."/>
            <person name="Goswami T."/>
            <person name="Rad R."/>
            <person name="Beausoleil S.A."/>
            <person name="Villen J."/>
            <person name="Haas W."/>
            <person name="Sowa M.E."/>
            <person name="Gygi S.P."/>
        </authorList>
    </citation>
    <scope>PHOSPHORYLATION [LARGE SCALE ANALYSIS] AT SER-338 AND SER-341</scope>
    <scope>IDENTIFICATION BY MASS SPECTROMETRY [LARGE SCALE ANALYSIS]</scope>
    <source>
        <tissue>Lung</tissue>
    </source>
</reference>
<comment type="function">
    <text evidence="1">May play a role in the process of differentiation and maturation of neuronal cells (By similarity). May regulate the activity of TRIM17 (By similarity). Is a negative regulator of PAX6 expression (By similarity).</text>
</comment>
<comment type="subunit">
    <text evidence="1">Interacts (via coiled coil) with TRIM17 (via coiled coil).</text>
</comment>
<comment type="tissue specificity">
    <text evidence="5">Expressed mainly in brain with high level in cerebral hemispheres and cerebellum. Lower expression in kidney, lung and spleen. In brain is detected in the hippocampus, thalamic and pretectal nuclei, substantia nigra, the dorsal part of the medulla, the cerebellum, in the olfactory nucleus, other cortical areas apart from hippocampus and the striatum. Indeed expression is confined in neuronal somata namely in the CA3 region and dentate gyrus of the hippocampus, caudate-putamen, parabranchial nucleus, olfactory nucleus, cortex, deep cerebellar nuclei and thalamus. Also highly expressed in the spleen. thymus and testis.</text>
</comment>
<comment type="developmental stage">
    <text>Expression was detected in brain at 14 dpc and 18 dpc. At P5 expression in cerebellum is detected in both the dividing neuroblasts and post-mitotic neurons of the external granular layer as well as in the developing granule neurons of the internal granular layer while the expression in Purkinje cells was lower. At P10 the expression in external and internal granular layers remained strong while at the same time the Purkinje cells also acquired significant level of expression.</text>
</comment>
<comment type="sequence caution" evidence="6">
    <conflict type="erroneous initiation">
        <sequence resource="EMBL-CDS" id="AAH39979"/>
    </conflict>
</comment>
<comment type="sequence caution" evidence="6">
    <conflict type="erroneous initiation">
        <sequence resource="EMBL-CDS" id="AAH45602"/>
    </conflict>
</comment>
<organism>
    <name type="scientific">Mus musculus</name>
    <name type="common">Mouse</name>
    <dbReference type="NCBI Taxonomy" id="10090"/>
    <lineage>
        <taxon>Eukaryota</taxon>
        <taxon>Metazoa</taxon>
        <taxon>Chordata</taxon>
        <taxon>Craniata</taxon>
        <taxon>Vertebrata</taxon>
        <taxon>Euteleostomi</taxon>
        <taxon>Mammalia</taxon>
        <taxon>Eutheria</taxon>
        <taxon>Euarchontoglires</taxon>
        <taxon>Glires</taxon>
        <taxon>Rodentia</taxon>
        <taxon>Myomorpha</taxon>
        <taxon>Muroidea</taxon>
        <taxon>Muridae</taxon>
        <taxon>Murinae</taxon>
        <taxon>Mus</taxon>
        <taxon>Mus</taxon>
    </lineage>
</organism>
<protein>
    <recommendedName>
        <fullName>Tripartite motif-containing protein 44</fullName>
    </recommendedName>
    <alternativeName>
        <fullName>Protein DIPB</fullName>
    </alternativeName>
    <alternativeName>
        <fullName>Protein Mc7</fullName>
    </alternativeName>
</protein>
<name>TRI44_MOUSE</name>
<keyword id="KW-0175">Coiled coil</keyword>
<keyword id="KW-0479">Metal-binding</keyword>
<keyword id="KW-0597">Phosphoprotein</keyword>
<keyword id="KW-1185">Reference proteome</keyword>
<keyword id="KW-0862">Zinc</keyword>
<keyword id="KW-0863">Zinc-finger</keyword>
<accession>Q9QXA7</accession>
<accession>Q80SV9</accession>
<accession>Q9JHR8</accession>